<proteinExistence type="evidence at protein level"/>
<reference key="1">
    <citation type="journal article" date="1987" name="DNA">
        <title>The human growth hormone gene locus: structure, evolution, and allelic variations.</title>
        <authorList>
            <person name="Hirt H."/>
            <person name="Kimelman J."/>
            <person name="Birnbaum M.J."/>
            <person name="Chen E.Y."/>
            <person name="Seeburg P.H."/>
            <person name="Eberhardt N.L."/>
            <person name="Barta A."/>
        </authorList>
    </citation>
    <scope>NUCLEOTIDE SEQUENCE [GENOMIC DNA]</scope>
</reference>
<reference key="2">
    <citation type="journal article" date="1983" name="J. Biol. Chem.">
        <title>Two structurally different genes produce the same secreted human placental lactogen hormone.</title>
        <authorList>
            <person name="Barrera-Saldana H.A."/>
            <person name="Seeburg P.H."/>
            <person name="Saunders G.F."/>
        </authorList>
    </citation>
    <scope>NUCLEOTIDE SEQUENCE [GENOMIC DNA / MRNA] (ISOFORM 1)</scope>
</reference>
<reference key="3">
    <citation type="journal article" date="1989" name="Genomics">
        <title>The human growth hormone locus: nucleotide sequence, biology, and evolution.</title>
        <authorList>
            <person name="Chen E.Y."/>
            <person name="Liao Y.C."/>
            <person name="Smith D.H."/>
            <person name="Barrera-Saldana H.A."/>
            <person name="Gelinas R.E."/>
            <person name="Seeburg P.H."/>
        </authorList>
    </citation>
    <scope>NUCLEOTIDE SEQUENCE [GENOMIC DNA]</scope>
</reference>
<reference key="4">
    <citation type="journal article" date="1982" name="DNA">
        <title>The human growth hormone gene family: nucleotide sequences show recent divergence and predict a new polypeptide hormone.</title>
        <authorList>
            <person name="Seeburg P.H."/>
        </authorList>
    </citation>
    <scope>NUCLEOTIDE SEQUENCE [GENOMIC DNA / MRNA] (ISOFORM 1)</scope>
</reference>
<reference key="5">
    <citation type="journal article" date="2008" name="Hum. Mutat.">
        <title>Complex signatures of locus-specific selective pressures and gene conversion on human growth hormone/chorionic somatomammotropin genes.</title>
        <authorList>
            <person name="Sedman L."/>
            <person name="Padhukasahasram B."/>
            <person name="Kelgo P."/>
            <person name="Laan M."/>
        </authorList>
    </citation>
    <scope>NUCLEOTIDE SEQUENCE [GENOMIC DNA]</scope>
</reference>
<reference key="6">
    <citation type="submission" date="2003-05" db="EMBL/GenBank/DDBJ databases">
        <title>Cloning of human full-length CDSs in BD Creator(TM) system donor vector.</title>
        <authorList>
            <person name="Kalnine N."/>
            <person name="Chen X."/>
            <person name="Rolfs A."/>
            <person name="Halleck A."/>
            <person name="Hines L."/>
            <person name="Eisenstein S."/>
            <person name="Koundinya M."/>
            <person name="Raphael J."/>
            <person name="Moreira D."/>
            <person name="Kelley T."/>
            <person name="LaBaer J."/>
            <person name="Lin Y."/>
            <person name="Phelan M."/>
            <person name="Farmer A."/>
        </authorList>
    </citation>
    <scope>NUCLEOTIDE SEQUENCE [LARGE SCALE MRNA] (ISOFORM 1)</scope>
</reference>
<reference key="7">
    <citation type="journal article" date="2004" name="Genome Res.">
        <title>The status, quality, and expansion of the NIH full-length cDNA project: the Mammalian Gene Collection (MGC).</title>
        <authorList>
            <consortium name="The MGC Project Team"/>
        </authorList>
    </citation>
    <scope>NUCLEOTIDE SEQUENCE [LARGE SCALE MRNA] (ISOFORM 1)</scope>
    <source>
        <tissue>Placenta</tissue>
        <tissue>Uterus</tissue>
    </source>
</reference>
<reference key="8">
    <citation type="journal article" date="1977" name="Nature">
        <title>Construction and analysis of recombinant DNA for human chorionic somatomammotropin.</title>
        <authorList>
            <person name="Shine J."/>
            <person name="Seeburg P.H."/>
            <person name="Martial J.A."/>
            <person name="Baxter J.D."/>
            <person name="Goodman H.M."/>
        </authorList>
    </citation>
    <scope>NUCLEOTIDE SEQUENCE [MRNA] OF 50-217 (ISOFORM 1)</scope>
</reference>
<reference key="9">
    <citation type="journal article" date="1973" name="Arch. Biochem. Biophys.">
        <title>Amino acid sequence of human chorionic somatomammotropin.</title>
        <authorList>
            <person name="Li C.H."/>
            <person name="Dixon J.S."/>
            <person name="Chung D."/>
        </authorList>
    </citation>
    <scope>PROTEIN SEQUENCE OF 27-217</scope>
</reference>
<reference key="10">
    <citation type="journal article" date="1971" name="Nature New Biol.">
        <title>Amino-acid sequence of human placental lactogen.</title>
        <authorList>
            <person name="Sherwood L.M."/>
            <person name="Handwerger S."/>
            <person name="McLaurin W.D."/>
            <person name="Lanner M."/>
        </authorList>
    </citation>
    <scope>PROTEIN SEQUENCE OF 27-217</scope>
</reference>
<reference key="11">
    <citation type="journal article" date="1972" name="Nature New Biol.">
        <authorList>
            <person name="Sherwood L.M."/>
            <person name="Handwerger S."/>
            <person name="McLaurin W.D."/>
            <person name="Lanner M."/>
        </authorList>
    </citation>
    <scope>ERRATUM OF PUBMED:5286363</scope>
</reference>
<reference key="12">
    <citation type="journal article" date="1979" name="J. Biol. Chem.">
        <title>Identification of the interchain disulfide bonds of dimeric human placental lactogen.</title>
        <authorList>
            <person name="Schneider A.B."/>
            <person name="Kowalski K."/>
            <person name="Russell J."/>
            <person name="Sherwood L.M."/>
        </authorList>
    </citation>
    <scope>INTERCHAIN DISULFIDE BONDS</scope>
    <scope>SUBUNIT</scope>
</reference>
<reference key="13">
    <citation type="journal article" date="2006" name="J. Mol. Biol.">
        <title>Crystal structure and site 1 binding energetics of human placental lactogen.</title>
        <authorList>
            <person name="Walsh S.T."/>
            <person name="Kossiakoff A.A."/>
        </authorList>
    </citation>
    <scope>FUNCTION</scope>
    <scope>ZINC-BINDING SITES</scope>
    <scope>DISULFIDE BONDS</scope>
</reference>
<protein>
    <recommendedName>
        <fullName>Chorionic somatomammotropin hormone 2</fullName>
        <shortName>Choriomammotropin</shortName>
    </recommendedName>
    <alternativeName>
        <fullName>Lactogen</fullName>
    </alternativeName>
    <alternativeName>
        <fullName>Placental lactogen</fullName>
        <shortName>PL</shortName>
    </alternativeName>
</protein>
<organism>
    <name type="scientific">Homo sapiens</name>
    <name type="common">Human</name>
    <dbReference type="NCBI Taxonomy" id="9606"/>
    <lineage>
        <taxon>Eukaryota</taxon>
        <taxon>Metazoa</taxon>
        <taxon>Chordata</taxon>
        <taxon>Craniata</taxon>
        <taxon>Vertebrata</taxon>
        <taxon>Euteleostomi</taxon>
        <taxon>Mammalia</taxon>
        <taxon>Eutheria</taxon>
        <taxon>Euarchontoglires</taxon>
        <taxon>Primates</taxon>
        <taxon>Haplorrhini</taxon>
        <taxon>Catarrhini</taxon>
        <taxon>Hominidae</taxon>
        <taxon>Homo</taxon>
    </lineage>
</organism>
<dbReference type="EMBL" id="V00573">
    <property type="protein sequence ID" value="CAA23836.1"/>
    <property type="molecule type" value="mRNA"/>
</dbReference>
<dbReference type="EMBL" id="J00289">
    <property type="protein sequence ID" value="AAA98747.1"/>
    <property type="molecule type" value="Genomic_DNA"/>
</dbReference>
<dbReference type="EMBL" id="K02401">
    <property type="protein sequence ID" value="AAA52115.1"/>
    <property type="molecule type" value="Genomic_DNA"/>
</dbReference>
<dbReference type="EMBL" id="M15894">
    <property type="protein sequence ID" value="AAA52116.1"/>
    <property type="molecule type" value="Genomic_DNA"/>
</dbReference>
<dbReference type="EMBL" id="J03071">
    <property type="protein sequence ID" value="AAA52553.1"/>
    <property type="molecule type" value="Genomic_DNA"/>
</dbReference>
<dbReference type="EMBL" id="EU421716">
    <property type="protein sequence ID" value="ABZ88723.1"/>
    <property type="molecule type" value="Genomic_DNA"/>
</dbReference>
<dbReference type="EMBL" id="BC022044">
    <property type="protein sequence ID" value="AAH22044.1"/>
    <property type="molecule type" value="mRNA"/>
</dbReference>
<dbReference type="EMBL" id="BC035965">
    <property type="protein sequence ID" value="AAH35965.1"/>
    <property type="molecule type" value="mRNA"/>
</dbReference>
<dbReference type="EMBL" id="BC119748">
    <property type="protein sequence ID" value="AAI19749.1"/>
    <property type="molecule type" value="mRNA"/>
</dbReference>
<dbReference type="CCDS" id="CCDS11646.1">
    <molecule id="P0DML3-2"/>
</dbReference>
<dbReference type="CCDS" id="CCDS42368.1">
    <molecule id="P0DML3-3"/>
</dbReference>
<dbReference type="CCDS" id="CCDS42369.1">
    <molecule id="P0DML3-1"/>
</dbReference>
<dbReference type="PIR" id="A26449">
    <property type="entry name" value="A26449"/>
</dbReference>
<dbReference type="PIR" id="E32435">
    <property type="entry name" value="E32435"/>
</dbReference>
<dbReference type="RefSeq" id="NP_066271.1">
    <molecule id="P0DML3-1"/>
    <property type="nucleotide sequence ID" value="NM_020991.4"/>
</dbReference>
<dbReference type="RefSeq" id="NP_072170.1">
    <molecule id="P0DML3-2"/>
    <property type="nucleotide sequence ID" value="NM_022644.3"/>
</dbReference>
<dbReference type="RefSeq" id="NP_072171.1">
    <molecule id="P0DML3-3"/>
    <property type="nucleotide sequence ID" value="NM_022645.2"/>
</dbReference>
<dbReference type="SMR" id="P0DML3"/>
<dbReference type="BioGRID" id="107829">
    <property type="interactions" value="14"/>
</dbReference>
<dbReference type="BioGRID" id="107830">
    <property type="interactions" value="15"/>
</dbReference>
<dbReference type="FunCoup" id="P0DML3">
    <property type="interactions" value="1041"/>
</dbReference>
<dbReference type="IntAct" id="P0DML3">
    <property type="interactions" value="8"/>
</dbReference>
<dbReference type="STRING" id="9606.ENSP00000376623"/>
<dbReference type="GlyGen" id="P0DML3">
    <property type="glycosylation" value="1 site"/>
</dbReference>
<dbReference type="iPTMnet" id="P0DML3"/>
<dbReference type="BioMuta" id="CSH2"/>
<dbReference type="MassIVE" id="P0DML3"/>
<dbReference type="PaxDb" id="9606-ENSP00000376623"/>
<dbReference type="Antibodypedia" id="31377">
    <property type="antibodies" value="119 antibodies from 20 providers"/>
</dbReference>
<dbReference type="DNASU" id="1442"/>
<dbReference type="Ensembl" id="ENST00000336844.9">
    <molecule id="P0DML3-2"/>
    <property type="protein sequence ID" value="ENSP00000338816.5"/>
    <property type="gene ID" value="ENSG00000213218.11"/>
</dbReference>
<dbReference type="Ensembl" id="ENST00000345366.8">
    <molecule id="P0DML3-3"/>
    <property type="protein sequence ID" value="ENSP00000308396.10"/>
    <property type="gene ID" value="ENSG00000213218.11"/>
</dbReference>
<dbReference type="Ensembl" id="ENST00000392886.7">
    <molecule id="P0DML3-1"/>
    <property type="protein sequence ID" value="ENSP00000376623.2"/>
    <property type="gene ID" value="ENSG00000213218.11"/>
</dbReference>
<dbReference type="GeneID" id="1443"/>
<dbReference type="KEGG" id="hsa:1442"/>
<dbReference type="KEGG" id="hsa:1443"/>
<dbReference type="MANE-Select" id="ENST00000392886.7">
    <property type="protein sequence ID" value="ENSP00000376623.2"/>
    <property type="RefSeq nucleotide sequence ID" value="NM_020991.4"/>
    <property type="RefSeq protein sequence ID" value="NP_066271.1"/>
</dbReference>
<dbReference type="UCSC" id="uc002jcg.3">
    <molecule id="P0DML3-1"/>
    <property type="organism name" value="human"/>
</dbReference>
<dbReference type="AGR" id="HGNC:2440"/>
<dbReference type="AGR" id="HGNC:2441"/>
<dbReference type="CTD" id="1442"/>
<dbReference type="CTD" id="1443"/>
<dbReference type="DisGeNET" id="1442"/>
<dbReference type="DisGeNET" id="1443"/>
<dbReference type="GeneCards" id="CSH2"/>
<dbReference type="HGNC" id="HGNC:2441">
    <property type="gene designation" value="CSH2"/>
</dbReference>
<dbReference type="HPA" id="ENSG00000213218">
    <property type="expression patterns" value="Tissue enriched (placenta)"/>
</dbReference>
<dbReference type="MIM" id="118820">
    <property type="type" value="gene"/>
</dbReference>
<dbReference type="neXtProt" id="NX_P0DML3"/>
<dbReference type="OpenTargets" id="ENSG00000213218"/>
<dbReference type="VEuPathDB" id="HostDB:ENSG00000213218"/>
<dbReference type="eggNOG" id="ENOG502R5GJ">
    <property type="taxonomic scope" value="Eukaryota"/>
</dbReference>
<dbReference type="GeneTree" id="ENSGT00950000182818"/>
<dbReference type="HOGENOM" id="CLU_088274_2_1_1"/>
<dbReference type="InParanoid" id="P0DML3"/>
<dbReference type="OrthoDB" id="9925773at2759"/>
<dbReference type="PAN-GO" id="P0DML3">
    <property type="GO annotations" value="10 GO annotations based on evolutionary models"/>
</dbReference>
<dbReference type="PhylomeDB" id="P0DML3"/>
<dbReference type="PathwayCommons" id="P0DML3"/>
<dbReference type="SignaLink" id="P0DML3"/>
<dbReference type="BioGRID-ORCS" id="1442">
    <property type="hits" value="13 hits in 1018 CRISPR screens"/>
</dbReference>
<dbReference type="BioGRID-ORCS" id="1443">
    <property type="hits" value="84 hits in 1038 CRISPR screens"/>
</dbReference>
<dbReference type="ChiTaRS" id="CSH2">
    <property type="organism name" value="human"/>
</dbReference>
<dbReference type="Pharos" id="P0DML3">
    <property type="development level" value="Tbio"/>
</dbReference>
<dbReference type="PRO" id="PR:P0DML3"/>
<dbReference type="Proteomes" id="UP000005640">
    <property type="component" value="Chromosome 17"/>
</dbReference>
<dbReference type="RNAct" id="P0DML3">
    <property type="molecule type" value="protein"/>
</dbReference>
<dbReference type="Bgee" id="ENSG00000213218">
    <property type="expression patterns" value="Expressed in placenta and 45 other cell types or tissues"/>
</dbReference>
<dbReference type="ExpressionAtlas" id="P0DML3">
    <property type="expression patterns" value="baseline and differential"/>
</dbReference>
<dbReference type="GO" id="GO:0005783">
    <property type="term" value="C:endoplasmic reticulum"/>
    <property type="evidence" value="ECO:0000314"/>
    <property type="project" value="AgBase"/>
</dbReference>
<dbReference type="GO" id="GO:0005615">
    <property type="term" value="C:extracellular space"/>
    <property type="evidence" value="ECO:0000318"/>
    <property type="project" value="GO_Central"/>
</dbReference>
<dbReference type="GO" id="GO:0031982">
    <property type="term" value="C:vesicle"/>
    <property type="evidence" value="ECO:0000314"/>
    <property type="project" value="AgBase"/>
</dbReference>
<dbReference type="GO" id="GO:0008083">
    <property type="term" value="F:growth factor activity"/>
    <property type="evidence" value="ECO:0000318"/>
    <property type="project" value="GO_Central"/>
</dbReference>
<dbReference type="GO" id="GO:0005131">
    <property type="term" value="F:growth hormone receptor binding"/>
    <property type="evidence" value="ECO:0000318"/>
    <property type="project" value="GO_Central"/>
</dbReference>
<dbReference type="GO" id="GO:0005179">
    <property type="term" value="F:hormone activity"/>
    <property type="evidence" value="ECO:0000318"/>
    <property type="project" value="GO_Central"/>
</dbReference>
<dbReference type="GO" id="GO:0046872">
    <property type="term" value="F:metal ion binding"/>
    <property type="evidence" value="ECO:0007669"/>
    <property type="project" value="UniProtKB-KW"/>
</dbReference>
<dbReference type="GO" id="GO:0048513">
    <property type="term" value="P:animal organ development"/>
    <property type="evidence" value="ECO:0000318"/>
    <property type="project" value="GO_Central"/>
</dbReference>
<dbReference type="GO" id="GO:0060396">
    <property type="term" value="P:growth hormone receptor signaling pathway"/>
    <property type="evidence" value="ECO:0000318"/>
    <property type="project" value="GO_Central"/>
</dbReference>
<dbReference type="GO" id="GO:0046427">
    <property type="term" value="P:positive regulation of receptor signaling pathway via JAK-STAT"/>
    <property type="evidence" value="ECO:0000318"/>
    <property type="project" value="GO_Central"/>
</dbReference>
<dbReference type="GO" id="GO:0031667">
    <property type="term" value="P:response to nutrient levels"/>
    <property type="evidence" value="ECO:0000318"/>
    <property type="project" value="GO_Central"/>
</dbReference>
<dbReference type="CDD" id="cd10285">
    <property type="entry name" value="somatotropin_like"/>
    <property type="match status" value="1"/>
</dbReference>
<dbReference type="FunFam" id="1.20.1250.10:FF:000012">
    <property type="entry name" value="Growth hormone 1"/>
    <property type="match status" value="1"/>
</dbReference>
<dbReference type="Gene3D" id="1.20.1250.10">
    <property type="match status" value="1"/>
</dbReference>
<dbReference type="InterPro" id="IPR009079">
    <property type="entry name" value="4_helix_cytokine-like_core"/>
</dbReference>
<dbReference type="InterPro" id="IPR034975">
    <property type="entry name" value="Somatotropin"/>
</dbReference>
<dbReference type="InterPro" id="IPR001400">
    <property type="entry name" value="Somatotropin/Prolactin"/>
</dbReference>
<dbReference type="InterPro" id="IPR018116">
    <property type="entry name" value="Somatotropin_CS"/>
</dbReference>
<dbReference type="PANTHER" id="PTHR11417:SF67">
    <property type="entry name" value="CHORIONIC SOMATOMAMMOTROPIN HORMONE 1-RELATED"/>
    <property type="match status" value="1"/>
</dbReference>
<dbReference type="PANTHER" id="PTHR11417">
    <property type="entry name" value="SOMATOTROPIN,PROLACTIN"/>
    <property type="match status" value="1"/>
</dbReference>
<dbReference type="Pfam" id="PF00103">
    <property type="entry name" value="Hormone_1"/>
    <property type="match status" value="1"/>
</dbReference>
<dbReference type="PRINTS" id="PR00836">
    <property type="entry name" value="SOMATOTROPIN"/>
</dbReference>
<dbReference type="SUPFAM" id="SSF47266">
    <property type="entry name" value="4-helical cytokines"/>
    <property type="match status" value="1"/>
</dbReference>
<dbReference type="PROSITE" id="PS00266">
    <property type="entry name" value="SOMATOTROPIN_1"/>
    <property type="match status" value="1"/>
</dbReference>
<dbReference type="PROSITE" id="PS00338">
    <property type="entry name" value="SOMATOTROPIN_2"/>
    <property type="match status" value="1"/>
</dbReference>
<comment type="function">
    <text evidence="1">Produced only during pregnancy and is involved in stimulating lactation, fetal growth and metabolism. Does not interact with GHR but only activates PRLR through zinc-induced dimerization.</text>
</comment>
<comment type="subunit">
    <text evidence="2">Can be found in a monomeric as well as dimeric form.</text>
</comment>
<comment type="interaction">
    <interactant intactId="EBI-12167441">
        <id>P0DML3</id>
    </interactant>
    <interactant intactId="EBI-16439278">
        <id>Q6FHY5</id>
        <label>MEOX2</label>
    </interactant>
    <organismsDiffer>false</organismsDiffer>
    <experiments>3</experiments>
</comment>
<comment type="interaction">
    <interactant intactId="EBI-12167441">
        <id>P0DML3</id>
    </interactant>
    <interactant intactId="EBI-744081">
        <id>Q96EQ0</id>
        <label>SGTB</label>
    </interactant>
    <organismsDiffer>false</organismsDiffer>
    <experiments>3</experiments>
</comment>
<comment type="subcellular location">
    <subcellularLocation>
        <location>Secreted</location>
    </subcellularLocation>
</comment>
<comment type="alternative products">
    <event type="alternative promoter"/>
    <isoform>
        <id>P0DML3-1</id>
        <name>1</name>
        <sequence type="displayed"/>
    </isoform>
    <isoform>
        <id>P0DML3-2</id>
        <name>2</name>
        <sequence type="described" ref="VSP_055245"/>
    </isoform>
    <isoform>
        <id>P0DML3-3</id>
        <name>3</name>
        <sequence type="described" ref="VSP_055244"/>
    </isoform>
</comment>
<comment type="miscellaneous">
    <text>CSH2 sequence only differs from CSH1 sequence in 1 aa.</text>
</comment>
<comment type="similarity">
    <text evidence="5">Belongs to the somatotropin/prolactin family.</text>
</comment>
<evidence type="ECO:0000269" key="1">
    <source>
    </source>
</evidence>
<evidence type="ECO:0000269" key="2">
    <source>
    </source>
</evidence>
<evidence type="ECO:0000269" key="3">
    <source>
    </source>
</evidence>
<evidence type="ECO:0000269" key="4">
    <source>
    </source>
</evidence>
<evidence type="ECO:0000305" key="5"/>
<feature type="signal peptide" evidence="3 4">
    <location>
        <begin position="1"/>
        <end position="26"/>
    </location>
</feature>
<feature type="chain" id="PRO_0000429797" description="Chorionic somatomammotropin hormone 2">
    <location>
        <begin position="27"/>
        <end position="217"/>
    </location>
</feature>
<feature type="binding site">
    <location>
        <position position="44"/>
    </location>
    <ligand>
        <name>Zn(2+)</name>
        <dbReference type="ChEBI" id="CHEBI:29105"/>
    </ligand>
</feature>
<feature type="binding site">
    <location>
        <position position="200"/>
    </location>
    <ligand>
        <name>Zn(2+)</name>
        <dbReference type="ChEBI" id="CHEBI:29105"/>
    </ligand>
</feature>
<feature type="disulfide bond" evidence="1">
    <location>
        <begin position="79"/>
        <end position="191"/>
    </location>
</feature>
<feature type="disulfide bond" description="In monomeric form" evidence="1">
    <location>
        <begin position="208"/>
        <end position="215"/>
    </location>
</feature>
<feature type="disulfide bond" description="Interchain (with C-215); in dimeric form" evidence="1">
    <location>
        <position position="208"/>
    </location>
</feature>
<feature type="disulfide bond" description="Interchain (with C-208); in dimeric form" evidence="1">
    <location>
        <position position="215"/>
    </location>
</feature>
<feature type="splice variant" id="VSP_055244" description="In isoform 3." evidence="5">
    <location>
        <begin position="58"/>
        <end position="152"/>
    </location>
</feature>
<feature type="splice variant" id="VSP_055245" description="In isoform 2." evidence="5">
    <original>RLEDGSRRTGQILKQTYSKFDTNSHNHDALLKNYGLLYCFRKDMDKVETFLRMVQCRSVEGSCGF</original>
    <variation>VRVAPGVANPGTPLA</variation>
    <location>
        <begin position="153"/>
        <end position="217"/>
    </location>
</feature>
<feature type="sequence variant" id="VAR_007167">
    <original>IS</original>
    <variation>L</variation>
    <location>
        <begin position="104"/>
        <end position="105"/>
    </location>
</feature>
<feature type="sequence conflict" description="In Ref. 10; AA sequence." evidence="5" ref="10">
    <original>I</original>
    <variation>T</variation>
    <location>
        <position position="84"/>
    </location>
</feature>
<feature type="sequence conflict" description="In Ref. 10; AA sequence." evidence="5" ref="10">
    <location>
        <position position="95"/>
    </location>
</feature>
<feature type="sequence conflict" description="In Ref. 10; AA sequence." evidence="5" ref="10">
    <location>
        <position position="116"/>
    </location>
</feature>
<feature type="sequence conflict" description="In Ref. 10; AA sequence." evidence="5" ref="10">
    <original>SDD</original>
    <variation>BBS</variation>
    <location>
        <begin position="134"/>
        <end position="136"/>
    </location>
</feature>
<sequence length="217" mass="24994">MAAGSRTSLLLAFALLCLPWLQEAGAVQTVPLSRLFDHAMLQAHRAHQLAIDTYQEFEETYIPKDQKYSFLHDSQTSFCFSDSIPTPSNMEETQQKSNLELLRISLLLIESWLEPVRFLRSMFANNLVYDTSDSDDYHLLKDLEEGIQTLMGRLEDGSRRTGQILKQTYSKFDTNSHNHDALLKNYGLLYCFRKDMDKVETFLRMVQCRSVEGSCGF</sequence>
<accession>P0DML3</accession>
<accession>P01243</accession>
<accession>Q0VDB1</accession>
<accession>Q14407</accession>
<name>CSH2_HUMAN</name>
<keyword id="KW-0877">Alternative promoter usage</keyword>
<keyword id="KW-0903">Direct protein sequencing</keyword>
<keyword id="KW-1015">Disulfide bond</keyword>
<keyword id="KW-0372">Hormone</keyword>
<keyword id="KW-0479">Metal-binding</keyword>
<keyword id="KW-1185">Reference proteome</keyword>
<keyword id="KW-0964">Secreted</keyword>
<keyword id="KW-0732">Signal</keyword>
<keyword id="KW-0862">Zinc</keyword>
<gene>
    <name type="primary">CSH2</name>
</gene>